<protein>
    <recommendedName>
        <fullName>S-adenosylmethionine synthase 5</fullName>
        <shortName>AdoMet synthase 5</shortName>
        <ecNumber evidence="5">2.5.1.6</ecNumber>
    </recommendedName>
    <alternativeName>
        <fullName>Methionine adenosyltransferase 5</fullName>
        <shortName>MAT 5</shortName>
    </alternativeName>
</protein>
<feature type="chain" id="PRO_0000363014" description="S-adenosylmethionine synthase 5">
    <location>
        <begin position="1"/>
        <end position="393"/>
    </location>
</feature>
<feature type="binding site" evidence="3">
    <location>
        <position position="9"/>
    </location>
    <ligand>
        <name>Mg(2+)</name>
        <dbReference type="ChEBI" id="CHEBI:18420"/>
    </ligand>
</feature>
<feature type="binding site" description="in other chain" evidence="4">
    <location>
        <position position="15"/>
    </location>
    <ligand>
        <name>ATP</name>
        <dbReference type="ChEBI" id="CHEBI:30616"/>
        <note>ligand shared between two neighboring subunits</note>
    </ligand>
</feature>
<feature type="binding site" evidence="2">
    <location>
        <position position="43"/>
    </location>
    <ligand>
        <name>K(+)</name>
        <dbReference type="ChEBI" id="CHEBI:29103"/>
    </ligand>
</feature>
<feature type="binding site" description="in other chain" evidence="2">
    <location>
        <position position="56"/>
    </location>
    <ligand>
        <name>L-methionine</name>
        <dbReference type="ChEBI" id="CHEBI:57844"/>
        <note>ligand shared between two neighboring subunits</note>
    </ligand>
</feature>
<feature type="binding site" description="in other chain" evidence="2">
    <location>
        <position position="99"/>
    </location>
    <ligand>
        <name>L-methionine</name>
        <dbReference type="ChEBI" id="CHEBI:57844"/>
        <note>ligand shared between two neighboring subunits</note>
    </ligand>
</feature>
<feature type="binding site" description="in other chain" evidence="4">
    <location>
        <begin position="167"/>
        <end position="169"/>
    </location>
    <ligand>
        <name>ATP</name>
        <dbReference type="ChEBI" id="CHEBI:30616"/>
        <note>ligand shared between two neighboring subunits</note>
    </ligand>
</feature>
<feature type="binding site" description="in other chain" evidence="4">
    <location>
        <begin position="235"/>
        <end position="238"/>
    </location>
    <ligand>
        <name>ATP</name>
        <dbReference type="ChEBI" id="CHEBI:30616"/>
        <note>ligand shared between two neighboring subunits</note>
    </ligand>
</feature>
<feature type="binding site" description="in other chain" evidence="4">
    <location>
        <position position="246"/>
    </location>
    <ligand>
        <name>ATP</name>
        <dbReference type="ChEBI" id="CHEBI:30616"/>
        <note>ligand shared between two neighboring subunits</note>
    </ligand>
</feature>
<feature type="binding site" evidence="2">
    <location>
        <position position="246"/>
    </location>
    <ligand>
        <name>L-methionine</name>
        <dbReference type="ChEBI" id="CHEBI:57844"/>
        <note>ligand shared between two neighboring subunits</note>
    </ligand>
</feature>
<feature type="binding site" description="in other chain" evidence="2">
    <location>
        <begin position="252"/>
        <end position="253"/>
    </location>
    <ligand>
        <name>ATP</name>
        <dbReference type="ChEBI" id="CHEBI:30616"/>
        <note>ligand shared between two neighboring subunits</note>
    </ligand>
</feature>
<feature type="binding site" evidence="2">
    <location>
        <position position="269"/>
    </location>
    <ligand>
        <name>ATP</name>
        <dbReference type="ChEBI" id="CHEBI:30616"/>
        <note>ligand shared between two neighboring subunits</note>
    </ligand>
</feature>
<feature type="binding site" evidence="2">
    <location>
        <position position="273"/>
    </location>
    <ligand>
        <name>ATP</name>
        <dbReference type="ChEBI" id="CHEBI:30616"/>
        <note>ligand shared between two neighboring subunits</note>
    </ligand>
</feature>
<feature type="binding site" evidence="3">
    <location>
        <position position="277"/>
    </location>
    <ligand>
        <name>ATP</name>
        <dbReference type="ChEBI" id="CHEBI:30616"/>
        <note>ligand shared between two neighboring subunits</note>
    </ligand>
</feature>
<feature type="binding site" description="in other chain" evidence="2">
    <location>
        <position position="277"/>
    </location>
    <ligand>
        <name>L-methionine</name>
        <dbReference type="ChEBI" id="CHEBI:57844"/>
        <note>ligand shared between two neighboring subunits</note>
    </ligand>
</feature>
<evidence type="ECO:0000250" key="1"/>
<evidence type="ECO:0000250" key="2">
    <source>
        <dbReference type="UniProtKB" id="P0A817"/>
    </source>
</evidence>
<evidence type="ECO:0000250" key="3">
    <source>
        <dbReference type="UniProtKB" id="P13444"/>
    </source>
</evidence>
<evidence type="ECO:0000250" key="4">
    <source>
        <dbReference type="UniProtKB" id="Q00266"/>
    </source>
</evidence>
<evidence type="ECO:0000250" key="5">
    <source>
        <dbReference type="UniProtKB" id="Q96551"/>
    </source>
</evidence>
<evidence type="ECO:0000269" key="6">
    <source ref="1"/>
</evidence>
<evidence type="ECO:0000305" key="7"/>
<dbReference type="EC" id="2.5.1.6" evidence="5"/>
<dbReference type="EMBL" id="AF379015">
    <property type="protein sequence ID" value="AAK71235.1"/>
    <property type="molecule type" value="mRNA"/>
</dbReference>
<dbReference type="SMR" id="Q94FA4"/>
<dbReference type="EnsemblPlants" id="mRNA.BjuB08g26290S">
    <property type="protein sequence ID" value="cds.BjuB08g26290S"/>
    <property type="gene ID" value="BjuB08g26290S"/>
</dbReference>
<dbReference type="Gramene" id="mRNA.BjuB08g26290S">
    <property type="protein sequence ID" value="cds.BjuB08g26290S"/>
    <property type="gene ID" value="BjuB08g26290S"/>
</dbReference>
<dbReference type="UniPathway" id="UPA00315">
    <property type="reaction ID" value="UER00080"/>
</dbReference>
<dbReference type="GO" id="GO:0005829">
    <property type="term" value="C:cytosol"/>
    <property type="evidence" value="ECO:0007669"/>
    <property type="project" value="EnsemblPlants"/>
</dbReference>
<dbReference type="GO" id="GO:0070062">
    <property type="term" value="C:extracellular exosome"/>
    <property type="evidence" value="ECO:0007669"/>
    <property type="project" value="EnsemblPlants"/>
</dbReference>
<dbReference type="GO" id="GO:0005524">
    <property type="term" value="F:ATP binding"/>
    <property type="evidence" value="ECO:0007669"/>
    <property type="project" value="UniProtKB-KW"/>
</dbReference>
<dbReference type="GO" id="GO:0046872">
    <property type="term" value="F:metal ion binding"/>
    <property type="evidence" value="ECO:0007669"/>
    <property type="project" value="UniProtKB-KW"/>
</dbReference>
<dbReference type="GO" id="GO:0004478">
    <property type="term" value="F:methionine adenosyltransferase activity"/>
    <property type="evidence" value="ECO:0007669"/>
    <property type="project" value="UniProtKB-EC"/>
</dbReference>
<dbReference type="GO" id="GO:0006730">
    <property type="term" value="P:one-carbon metabolic process"/>
    <property type="evidence" value="ECO:0007669"/>
    <property type="project" value="UniProtKB-KW"/>
</dbReference>
<dbReference type="GO" id="GO:0006556">
    <property type="term" value="P:S-adenosylmethionine biosynthetic process"/>
    <property type="evidence" value="ECO:0007669"/>
    <property type="project" value="UniProtKB-UniPathway"/>
</dbReference>
<dbReference type="CDD" id="cd18079">
    <property type="entry name" value="S-AdoMet_synt"/>
    <property type="match status" value="1"/>
</dbReference>
<dbReference type="FunFam" id="3.30.300.10:FF:000003">
    <property type="entry name" value="S-adenosylmethionine synthase"/>
    <property type="match status" value="1"/>
</dbReference>
<dbReference type="FunFam" id="3.30.300.10:FF:000004">
    <property type="entry name" value="S-adenosylmethionine synthase"/>
    <property type="match status" value="1"/>
</dbReference>
<dbReference type="FunFam" id="3.30.300.10:FF:000011">
    <property type="entry name" value="S-adenosylmethionine synthase"/>
    <property type="match status" value="1"/>
</dbReference>
<dbReference type="FunFam" id="3.30.300.10:FF:000021">
    <property type="entry name" value="S-adenosylmethionine synthetase 1"/>
    <property type="match status" value="1"/>
</dbReference>
<dbReference type="Gene3D" id="3.30.300.10">
    <property type="match status" value="3"/>
</dbReference>
<dbReference type="HAMAP" id="MF_00086">
    <property type="entry name" value="S_AdoMet_synth1"/>
    <property type="match status" value="1"/>
</dbReference>
<dbReference type="InterPro" id="IPR022631">
    <property type="entry name" value="ADOMET_SYNTHASE_CS"/>
</dbReference>
<dbReference type="InterPro" id="IPR022630">
    <property type="entry name" value="S-AdoMet_synt_C"/>
</dbReference>
<dbReference type="InterPro" id="IPR022629">
    <property type="entry name" value="S-AdoMet_synt_central"/>
</dbReference>
<dbReference type="InterPro" id="IPR022628">
    <property type="entry name" value="S-AdoMet_synt_N"/>
</dbReference>
<dbReference type="InterPro" id="IPR002133">
    <property type="entry name" value="S-AdoMet_synthetase"/>
</dbReference>
<dbReference type="InterPro" id="IPR022636">
    <property type="entry name" value="S-AdoMet_synthetase_sfam"/>
</dbReference>
<dbReference type="NCBIfam" id="TIGR01034">
    <property type="entry name" value="metK"/>
    <property type="match status" value="1"/>
</dbReference>
<dbReference type="PANTHER" id="PTHR11964">
    <property type="entry name" value="S-ADENOSYLMETHIONINE SYNTHETASE"/>
    <property type="match status" value="1"/>
</dbReference>
<dbReference type="Pfam" id="PF02773">
    <property type="entry name" value="S-AdoMet_synt_C"/>
    <property type="match status" value="1"/>
</dbReference>
<dbReference type="Pfam" id="PF02772">
    <property type="entry name" value="S-AdoMet_synt_M"/>
    <property type="match status" value="1"/>
</dbReference>
<dbReference type="Pfam" id="PF00438">
    <property type="entry name" value="S-AdoMet_synt_N"/>
    <property type="match status" value="1"/>
</dbReference>
<dbReference type="PIRSF" id="PIRSF000497">
    <property type="entry name" value="MAT"/>
    <property type="match status" value="1"/>
</dbReference>
<dbReference type="SUPFAM" id="SSF55973">
    <property type="entry name" value="S-adenosylmethionine synthetase"/>
    <property type="match status" value="3"/>
</dbReference>
<dbReference type="PROSITE" id="PS00376">
    <property type="entry name" value="ADOMET_SYNTHASE_1"/>
    <property type="match status" value="1"/>
</dbReference>
<dbReference type="PROSITE" id="PS00377">
    <property type="entry name" value="ADOMET_SYNTHASE_2"/>
    <property type="match status" value="1"/>
</dbReference>
<sequence length="393" mass="43184">METFLFTSESVNEGHPDKLCDQISDAVLDACLEQDPDSKVACETCTKTNMVMVFGEITTKATVDYEKIVRDTCRSIGFISDDVGLDADKCKVLVNIEQQSPDIAQGVHGHFTKRPEDIGAGDQGHMFGYATDETPELMPLSHVLATKIGAKLTEVRKNGTCRWLRPDGKTQVTVEYYNDNGAMVPVRVHTVLISTQHDETVTNDEIARDLKEHVIKPIIPEKYLDDKTIFHLNPSGRFVIGGPHGDAGLTGRKIIIDTYGGWGAHGGGAFSGKDPTKVDRSGAYIVRQAAKSVVANGMARRALVQVSYAIGVPEPLSVFVDTYGTGLIPDKEILKIVKESFDFRPGMMTINLDLKRGGNGRFLKTAAYGHFGRDDPDFTWEVVKPLKWDKPQA</sequence>
<proteinExistence type="evidence at transcript level"/>
<keyword id="KW-0067">ATP-binding</keyword>
<keyword id="KW-0170">Cobalt</keyword>
<keyword id="KW-0963">Cytoplasm</keyword>
<keyword id="KW-0460">Magnesium</keyword>
<keyword id="KW-0479">Metal-binding</keyword>
<keyword id="KW-0547">Nucleotide-binding</keyword>
<keyword id="KW-0554">One-carbon metabolism</keyword>
<keyword id="KW-0630">Potassium</keyword>
<keyword id="KW-0808">Transferase</keyword>
<accession>Q94FA4</accession>
<reference key="1">
    <citation type="journal article" date="2002" name="Physiol. Plantarum">
        <title>Characterization of S-adenosylmethionine synthetase genes and its expression is associated with ethylene synthesis in mustard (Brassica juncea).</title>
        <authorList>
            <person name="Lim C.-C."/>
            <person name="Liu J.-Z."/>
            <person name="Pua E.-C."/>
        </authorList>
    </citation>
    <scope>NUCLEOTIDE SEQUENCE [MRNA]</scope>
    <scope>TISSUE SPECIFICITY</scope>
</reference>
<comment type="function">
    <text evidence="5">Catalyzes the formation of S-adenosylmethionine from methionine and ATP. The reaction comprises two steps that are both catalyzed by the same enzyme: formation of S-adenosylmethionine (AdoMet) and triphosphate, and subsequent hydrolysis of the triphosphate.</text>
</comment>
<comment type="catalytic activity">
    <reaction evidence="5">
        <text>L-methionine + ATP + H2O = S-adenosyl-L-methionine + phosphate + diphosphate</text>
        <dbReference type="Rhea" id="RHEA:21080"/>
        <dbReference type="ChEBI" id="CHEBI:15377"/>
        <dbReference type="ChEBI" id="CHEBI:30616"/>
        <dbReference type="ChEBI" id="CHEBI:33019"/>
        <dbReference type="ChEBI" id="CHEBI:43474"/>
        <dbReference type="ChEBI" id="CHEBI:57844"/>
        <dbReference type="ChEBI" id="CHEBI:59789"/>
        <dbReference type="EC" id="2.5.1.6"/>
    </reaction>
</comment>
<comment type="cofactor">
    <cofactor evidence="5">
        <name>Mn(2+)</name>
        <dbReference type="ChEBI" id="CHEBI:29035"/>
    </cofactor>
    <cofactor evidence="5">
        <name>Mg(2+)</name>
        <dbReference type="ChEBI" id="CHEBI:18420"/>
    </cofactor>
    <cofactor evidence="5">
        <name>Co(2+)</name>
        <dbReference type="ChEBI" id="CHEBI:48828"/>
    </cofactor>
    <text evidence="3 5">Binds 2 divalent ions per subunit. The metal ions interact primarily with the substrate (By similarity). Can utilize magnesium, manganese or cobalt (in vitro) (By similarity).</text>
</comment>
<comment type="cofactor">
    <cofactor evidence="5">
        <name>K(+)</name>
        <dbReference type="ChEBI" id="CHEBI:29103"/>
    </cofactor>
    <text evidence="3">Binds 1 potassium ion per subunit. The potassium ion interacts primarily with the substrate (By similarity).</text>
</comment>
<comment type="pathway">
    <text evidence="5">Amino-acid biosynthesis; S-adenosyl-L-methionine biosynthesis; S-adenosyl-L-methionine from L-methionine: step 1/1.</text>
</comment>
<comment type="subunit">
    <text evidence="1">Homotetramer.</text>
</comment>
<comment type="subcellular location">
    <subcellularLocation>
        <location evidence="1">Cytoplasm</location>
    </subcellularLocation>
</comment>
<comment type="tissue specificity">
    <text evidence="6">Mostly expressed in flowers, seedpods and roots, and, to a lower extent, in stems and leaves.</text>
</comment>
<comment type="similarity">
    <text evidence="7">Belongs to the AdoMet synthase family.</text>
</comment>
<organism>
    <name type="scientific">Brassica juncea</name>
    <name type="common">Indian mustard</name>
    <name type="synonym">Sinapis juncea</name>
    <dbReference type="NCBI Taxonomy" id="3707"/>
    <lineage>
        <taxon>Eukaryota</taxon>
        <taxon>Viridiplantae</taxon>
        <taxon>Streptophyta</taxon>
        <taxon>Embryophyta</taxon>
        <taxon>Tracheophyta</taxon>
        <taxon>Spermatophyta</taxon>
        <taxon>Magnoliopsida</taxon>
        <taxon>eudicotyledons</taxon>
        <taxon>Gunneridae</taxon>
        <taxon>Pentapetalae</taxon>
        <taxon>rosids</taxon>
        <taxon>malvids</taxon>
        <taxon>Brassicales</taxon>
        <taxon>Brassicaceae</taxon>
        <taxon>Brassiceae</taxon>
        <taxon>Brassica</taxon>
    </lineage>
</organism>
<name>METK5_BRAJU</name>
<gene>
    <name type="primary">MSAMS5</name>
</gene>